<keyword id="KW-0002">3D-structure</keyword>
<keyword id="KW-0044">Antibiotic</keyword>
<keyword id="KW-0929">Antimicrobial</keyword>
<keyword id="KW-0078">Bacteriocin</keyword>
<keyword id="KW-0903">Direct protein sequencing</keyword>
<keyword id="KW-1015">Disulfide bond</keyword>
<keyword id="KW-0614">Plasmid</keyword>
<keyword id="KW-0964">Secreted</keyword>
<geneLocation type="plasmid">
    <name>pSRQ11</name>
</geneLocation>
<geneLocation type="plasmid">
    <name>pSMB74</name>
</geneLocation>
<protein>
    <recommendedName>
        <fullName>Bacteriocin pediocin PA-1</fullName>
    </recommendedName>
    <alternativeName>
        <fullName>Pediocin ACH</fullName>
    </alternativeName>
</protein>
<reference key="1">
    <citation type="journal article" date="1992" name="Appl. Environ. Microbiol.">
        <title>Cloning, expression, and nucleotide sequence of genes involved in production of pediocin PA-1, and bacteriocin from Pediococcus acidilactici PAC1.0.</title>
        <authorList>
            <person name="Marugg J.D."/>
            <person name="Gonzalez C.F."/>
            <person name="Kunka B.S."/>
            <person name="Ledeboer A.M."/>
            <person name="Pucci M.J."/>
            <person name="Toonen M.Y."/>
            <person name="Walker S.A."/>
            <person name="Zoetmulder L.C.M."/>
            <person name="Vandenbergh P.A."/>
        </authorList>
    </citation>
    <scope>NUCLEOTIDE SEQUENCE [GENOMIC DNA]</scope>
    <source>
        <strain>PAC-1.0</strain>
        <plasmid>pSRQ11</plasmid>
    </source>
</reference>
<reference key="2">
    <citation type="journal article" date="1994" name="Lett. Appl. Microbiol.">
        <title>Complete nucleotide sequence of pSMB 74, a plasmid encoding the production of pediocin AcH in Pediococcus acidilactici.</title>
        <authorList>
            <person name="Motlagh A.M."/>
            <person name="Bukhtiyarova M.B."/>
            <person name="Ray B.R."/>
        </authorList>
    </citation>
    <scope>NUCLEOTIDE SEQUENCE [GENOMIC DNA]</scope>
    <source>
        <strain>H</strain>
        <plasmid>pSMB74</plasmid>
    </source>
</reference>
<reference key="3">
    <citation type="journal article" date="1992" name="Arch. Biochem. Biophys.">
        <title>Purification and primary structure of pediocin PA-1 produced by Pediococcus acidilactici PAC-1.0.</title>
        <authorList>
            <person name="Henderson J.T."/>
            <person name="Chopko A.L."/>
            <person name="van Wassenaar P.D."/>
        </authorList>
    </citation>
    <scope>PROTEIN SEQUENCE OF 19-62</scope>
    <scope>DISULFIDE BONDS</scope>
    <source>
        <strain>PAC-1.0</strain>
        <plasmid>pSRQ11</plasmid>
    </source>
</reference>
<reference key="4">
    <citation type="journal article" date="1992" name="J. Gen. Microbiol.">
        <title>Purification and amino acid sequence of a bacteriocin produced by Pediococcus acidilactici.</title>
        <authorList>
            <person name="Lozano J.C.N."/>
            <person name="Meyer J.N."/>
            <person name="Sletten K."/>
            <person name="Pelaz C."/>
            <person name="Nes I.F."/>
        </authorList>
    </citation>
    <scope>PROTEIN SEQUENCE OF 19-61</scope>
</reference>
<organism>
    <name type="scientific">Pediococcus acidilactici</name>
    <dbReference type="NCBI Taxonomy" id="1254"/>
    <lineage>
        <taxon>Bacteria</taxon>
        <taxon>Bacillati</taxon>
        <taxon>Bacillota</taxon>
        <taxon>Bacilli</taxon>
        <taxon>Lactobacillales</taxon>
        <taxon>Lactobacillaceae</taxon>
        <taxon>Pediococcus</taxon>
        <taxon>Pediococcus acidilactici group</taxon>
    </lineage>
</organism>
<sequence>MKKIEKLTEKEMANIIGGKYYGNGVTCGKHSCSVDWGKATTCIINNGAMAWATGGHQGNHKC</sequence>
<accession>P29430</accession>
<accession>P34912</accession>
<name>PPA1_PEDAC</name>
<gene>
    <name type="primary">pedA</name>
    <name type="synonym">pap</name>
    <name type="synonym">papA</name>
</gene>
<evidence type="ECO:0000269" key="1">
    <source>
    </source>
</evidence>
<evidence type="ECO:0000269" key="2">
    <source>
    </source>
</evidence>
<evidence type="ECO:0000305" key="3"/>
<evidence type="ECO:0007829" key="4">
    <source>
        <dbReference type="PDB" id="5UKZ"/>
    </source>
</evidence>
<evidence type="ECO:0007829" key="5">
    <source>
        <dbReference type="PDB" id="7VLY"/>
    </source>
</evidence>
<dbReference type="EMBL" id="M83924">
    <property type="protein sequence ID" value="AAA25559.1"/>
    <property type="molecule type" value="Genomic_DNA"/>
</dbReference>
<dbReference type="EMBL" id="M90679">
    <property type="protein sequence ID" value="AAA98337.1"/>
    <property type="molecule type" value="Genomic_DNA"/>
</dbReference>
<dbReference type="EMBL" id="U02482">
    <property type="protein sequence ID" value="AAC43293.1"/>
    <property type="molecule type" value="Genomic_DNA"/>
</dbReference>
<dbReference type="PIR" id="A48941">
    <property type="entry name" value="A48941"/>
</dbReference>
<dbReference type="RefSeq" id="NP_857602.1">
    <property type="nucleotide sequence ID" value="NC_004832.1"/>
</dbReference>
<dbReference type="RefSeq" id="WP_002834575.1">
    <property type="nucleotide sequence ID" value="NZ_VCYC01000012.1"/>
</dbReference>
<dbReference type="PDB" id="5UKZ">
    <property type="method" value="NMR"/>
    <property type="chains" value="A=19-62"/>
</dbReference>
<dbReference type="PDB" id="7VLY">
    <property type="method" value="EM"/>
    <property type="resolution" value="2.45 A"/>
    <property type="chains" value="A/E/H=19-62"/>
</dbReference>
<dbReference type="PDBsum" id="5UKZ"/>
<dbReference type="PDBsum" id="7VLY"/>
<dbReference type="EMDB" id="EMD-32031"/>
<dbReference type="SMR" id="P29430"/>
<dbReference type="TCDB" id="1.C.24.1.1">
    <property type="family name" value="the pediocin (pediocin) family"/>
</dbReference>
<dbReference type="GO" id="GO:0005576">
    <property type="term" value="C:extracellular region"/>
    <property type="evidence" value="ECO:0007669"/>
    <property type="project" value="UniProtKB-SubCell"/>
</dbReference>
<dbReference type="GO" id="GO:0042742">
    <property type="term" value="P:defense response to bacterium"/>
    <property type="evidence" value="ECO:0007669"/>
    <property type="project" value="UniProtKB-KW"/>
</dbReference>
<dbReference type="GO" id="GO:0031640">
    <property type="term" value="P:killing of cells of another organism"/>
    <property type="evidence" value="ECO:0007669"/>
    <property type="project" value="UniProtKB-KW"/>
</dbReference>
<dbReference type="Gene3D" id="1.20.5.130">
    <property type="match status" value="1"/>
</dbReference>
<dbReference type="InterPro" id="IPR002633">
    <property type="entry name" value="Bacteriocin_IIa"/>
</dbReference>
<dbReference type="InterPro" id="IPR023384">
    <property type="entry name" value="Bacteriocin_IIa_CS"/>
</dbReference>
<dbReference type="InterPro" id="IPR023388">
    <property type="entry name" value="Bacteriocin_IIa_dom_sf"/>
</dbReference>
<dbReference type="InterPro" id="IPR010133">
    <property type="entry name" value="Bacteriocin_signal_seq"/>
</dbReference>
<dbReference type="NCBIfam" id="TIGR01847">
    <property type="entry name" value="bacteriocin_sig"/>
    <property type="match status" value="1"/>
</dbReference>
<dbReference type="Pfam" id="PF01721">
    <property type="entry name" value="Bacteriocin_II"/>
    <property type="match status" value="1"/>
</dbReference>
<dbReference type="PROSITE" id="PS60030">
    <property type="entry name" value="BACTERIOCIN_IIA"/>
    <property type="match status" value="1"/>
</dbReference>
<comment type="function">
    <text>Bactericidal activity (effective inhibitor of L.monocytogenes).</text>
</comment>
<comment type="subcellular location">
    <subcellularLocation>
        <location>Secreted</location>
    </subcellularLocation>
</comment>
<comment type="similarity">
    <text evidence="3">Belongs to the bacteriocin class IIA/YGNGV family.</text>
</comment>
<proteinExistence type="evidence at protein level"/>
<feature type="propeptide" id="PRO_0000002745" evidence="1 2">
    <location>
        <begin position="1"/>
        <end position="18"/>
    </location>
</feature>
<feature type="chain" id="PRO_0000002746" description="Bacteriocin pediocin PA-1">
    <location>
        <begin position="19"/>
        <end position="62"/>
    </location>
</feature>
<feature type="region of interest" description="Hydrophobic">
    <location>
        <begin position="40"/>
        <end position="52"/>
    </location>
</feature>
<feature type="disulfide bond" evidence="2">
    <location>
        <begin position="27"/>
        <end position="32"/>
    </location>
</feature>
<feature type="disulfide bond" evidence="2">
    <location>
        <begin position="42"/>
        <end position="62"/>
    </location>
</feature>
<feature type="turn" evidence="4">
    <location>
        <begin position="22"/>
        <end position="24"/>
    </location>
</feature>
<feature type="strand" evidence="4">
    <location>
        <begin position="25"/>
        <end position="27"/>
    </location>
</feature>
<feature type="strand" evidence="4">
    <location>
        <begin position="32"/>
        <end position="34"/>
    </location>
</feature>
<feature type="helix" evidence="5">
    <location>
        <begin position="36"/>
        <end position="53"/>
    </location>
</feature>
<feature type="turn" evidence="4">
    <location>
        <begin position="57"/>
        <end position="59"/>
    </location>
</feature>